<protein>
    <recommendedName>
        <fullName>N-acylneuraminate cytidylyltransferase</fullName>
        <ecNumber>2.7.7.43</ecNumber>
    </recommendedName>
    <alternativeName>
        <fullName>CMP-N-acetylneuraminic acid synthase</fullName>
        <shortName>CMP-NeuNAc synthase</shortName>
    </alternativeName>
    <alternativeName>
        <fullName>CMP-sialic acid synthase</fullName>
    </alternativeName>
</protein>
<accession>Q9AFG9</accession>
<evidence type="ECO:0000250" key="1"/>
<evidence type="ECO:0000305" key="2"/>
<dbReference type="EC" id="2.7.7.43"/>
<dbReference type="EMBL" id="AF349539">
    <property type="protein sequence ID" value="AAK29664.1"/>
    <property type="molecule type" value="Genomic_DNA"/>
</dbReference>
<dbReference type="EMBL" id="AE009948">
    <property type="protein sequence ID" value="AAN00040.1"/>
    <property type="molecule type" value="Genomic_DNA"/>
</dbReference>
<dbReference type="RefSeq" id="NP_688167.1">
    <property type="nucleotide sequence ID" value="NC_004116.1"/>
</dbReference>
<dbReference type="RefSeq" id="WP_000802362.1">
    <property type="nucleotide sequence ID" value="NC_004116.1"/>
</dbReference>
<dbReference type="SMR" id="Q9AFG9"/>
<dbReference type="STRING" id="208435.SAG1158"/>
<dbReference type="KEGG" id="sag:SAG1158"/>
<dbReference type="PATRIC" id="fig|208435.3.peg.1164"/>
<dbReference type="HOGENOM" id="CLU_660110_0_0_9"/>
<dbReference type="OrthoDB" id="9805604at2"/>
<dbReference type="BRENDA" id="2.7.7.43">
    <property type="organism ID" value="5917"/>
</dbReference>
<dbReference type="Proteomes" id="UP000000821">
    <property type="component" value="Chromosome"/>
</dbReference>
<dbReference type="GO" id="GO:0005737">
    <property type="term" value="C:cytoplasm"/>
    <property type="evidence" value="ECO:0007669"/>
    <property type="project" value="UniProtKB-SubCell"/>
</dbReference>
<dbReference type="GO" id="GO:0008781">
    <property type="term" value="F:N-acylneuraminate cytidylyltransferase activity"/>
    <property type="evidence" value="ECO:0007669"/>
    <property type="project" value="UniProtKB-EC"/>
</dbReference>
<dbReference type="GO" id="GO:0000271">
    <property type="term" value="P:polysaccharide biosynthetic process"/>
    <property type="evidence" value="ECO:0007669"/>
    <property type="project" value="UniProtKB-KW"/>
</dbReference>
<dbReference type="CDD" id="cd02513">
    <property type="entry name" value="CMP-NeuAc_Synthase"/>
    <property type="match status" value="1"/>
</dbReference>
<dbReference type="Gene3D" id="3.40.50.1110">
    <property type="entry name" value="SGNH hydrolase"/>
    <property type="match status" value="1"/>
</dbReference>
<dbReference type="Gene3D" id="3.90.550.10">
    <property type="entry name" value="Spore Coat Polysaccharide Biosynthesis Protein SpsA, Chain A"/>
    <property type="match status" value="1"/>
</dbReference>
<dbReference type="InterPro" id="IPR050793">
    <property type="entry name" value="CMP-NeuNAc_synthase"/>
</dbReference>
<dbReference type="InterPro" id="IPR003329">
    <property type="entry name" value="Cytidylyl_trans"/>
</dbReference>
<dbReference type="InterPro" id="IPR029044">
    <property type="entry name" value="Nucleotide-diphossugar_trans"/>
</dbReference>
<dbReference type="InterPro" id="IPR013830">
    <property type="entry name" value="SGNH_hydro"/>
</dbReference>
<dbReference type="InterPro" id="IPR036514">
    <property type="entry name" value="SGNH_hydro_sf"/>
</dbReference>
<dbReference type="PANTHER" id="PTHR21485">
    <property type="entry name" value="HAD SUPERFAMILY MEMBERS CMAS AND KDSC"/>
    <property type="match status" value="1"/>
</dbReference>
<dbReference type="PANTHER" id="PTHR21485:SF6">
    <property type="entry name" value="N-ACYLNEURAMINATE CYTIDYLYLTRANSFERASE-RELATED"/>
    <property type="match status" value="1"/>
</dbReference>
<dbReference type="Pfam" id="PF02348">
    <property type="entry name" value="CTP_transf_3"/>
    <property type="match status" value="1"/>
</dbReference>
<dbReference type="Pfam" id="PF13472">
    <property type="entry name" value="Lipase_GDSL_2"/>
    <property type="match status" value="1"/>
</dbReference>
<dbReference type="SUPFAM" id="SSF53448">
    <property type="entry name" value="Nucleotide-diphospho-sugar transferases"/>
    <property type="match status" value="1"/>
</dbReference>
<dbReference type="SUPFAM" id="SSF52266">
    <property type="entry name" value="SGNH hydrolase"/>
    <property type="match status" value="1"/>
</dbReference>
<feature type="chain" id="PRO_0000213209" description="N-acylneuraminate cytidylyltransferase">
    <location>
        <begin position="1"/>
        <end position="413"/>
    </location>
</feature>
<name>NEUA_STRA5</name>
<reference key="1">
    <citation type="submission" date="2001-02" db="EMBL/GenBank/DDBJ databases">
        <title>Streptococcus agalactiae type V polysaccharide synthesis operon complete sequence.</title>
        <authorList>
            <person name="McKinnon K."/>
            <person name="Chaffin D.O."/>
            <person name="Rubens C.E."/>
        </authorList>
    </citation>
    <scope>NUCLEOTIDE SEQUENCE [GENOMIC DNA]</scope>
    <source>
        <strain>CNCTC 1/82 / Serotype V</strain>
    </source>
</reference>
<reference key="2">
    <citation type="journal article" date="2002" name="Proc. Natl. Acad. Sci. U.S.A.">
        <title>Complete genome sequence and comparative genomic analysis of an emerging human pathogen, serotype V Streptococcus agalactiae.</title>
        <authorList>
            <person name="Tettelin H."/>
            <person name="Masignani V."/>
            <person name="Cieslewicz M.J."/>
            <person name="Eisen J.A."/>
            <person name="Peterson S.N."/>
            <person name="Wessels M.R."/>
            <person name="Paulsen I.T."/>
            <person name="Nelson K.E."/>
            <person name="Margarit I."/>
            <person name="Read T.D."/>
            <person name="Madoff L.C."/>
            <person name="Wolf A.M."/>
            <person name="Beanan M.J."/>
            <person name="Brinkac L.M."/>
            <person name="Daugherty S.C."/>
            <person name="DeBoy R.T."/>
            <person name="Durkin A.S."/>
            <person name="Kolonay J.F."/>
            <person name="Madupu R."/>
            <person name="Lewis M.R."/>
            <person name="Radune D."/>
            <person name="Fedorova N.B."/>
            <person name="Scanlan D."/>
            <person name="Khouri H.M."/>
            <person name="Mulligan S."/>
            <person name="Carty H.A."/>
            <person name="Cline R.T."/>
            <person name="Van Aken S.E."/>
            <person name="Gill J."/>
            <person name="Scarselli M."/>
            <person name="Mora M."/>
            <person name="Iacobini E.T."/>
            <person name="Brettoni C."/>
            <person name="Galli G."/>
            <person name="Mariani M."/>
            <person name="Vegni F."/>
            <person name="Maione D."/>
            <person name="Rinaudo D."/>
            <person name="Rappuoli R."/>
            <person name="Telford J.L."/>
            <person name="Kasper D.L."/>
            <person name="Grandi G."/>
            <person name="Fraser C.M."/>
        </authorList>
    </citation>
    <scope>NUCLEOTIDE SEQUENCE [LARGE SCALE GENOMIC DNA]</scope>
    <source>
        <strain>ATCC BAA-611 / 2603 V/R</strain>
    </source>
</reference>
<sequence length="413" mass="47644">MKPICIIPARSGSKGLPDKNMLFLSGKPMIFHTIDAAIESGMFDKKDIFVSTDSELYREICLERGISVVMRKPELSTDQATSYDMLKDFLSDYEDNQEFVLLQVTSPLRKSWHIKEAMEYYSSHDVDNVVSFSEVEKHPSLFTTLSDEGYAIDMVGADKGYRRQDLQPLYYPNGAIFISNKETYLREKSFFTSRTYAYQMAKEFSLDVDTRDDFIHVIGHLFFDYAIREKENKVFYKEGYSRLFNREASKIILGDSKTISTSLESYHNYSQGGVTLATMLENLPNFLTANVTEAFVSIGVNDLITGYSVEEIFSNFQKLYSLLAENKIKMRLTTIAYTLFRETVNNADIEKINQWLTEFCYQNQIPLLDINRFLSKDGNLNYHLTSDGLHFTQEANDLLQSQYQLFVDEVKTL</sequence>
<proteinExistence type="inferred from homology"/>
<organism>
    <name type="scientific">Streptococcus agalactiae serotype V (strain ATCC BAA-611 / 2603 V/R)</name>
    <dbReference type="NCBI Taxonomy" id="208435"/>
    <lineage>
        <taxon>Bacteria</taxon>
        <taxon>Bacillati</taxon>
        <taxon>Bacillota</taxon>
        <taxon>Bacilli</taxon>
        <taxon>Lactobacillales</taxon>
        <taxon>Streptococcaceae</taxon>
        <taxon>Streptococcus</taxon>
    </lineage>
</organism>
<comment type="function">
    <text evidence="1">Catalyzes the formation of CMP-N-acetylneuraminic acid (CMP-NeuNAc), which is essential for the formation of the capsule.</text>
</comment>
<comment type="catalytic activity">
    <reaction>
        <text>an N-acylneuraminate + CTP = a CMP-N-acyl-beta-neuraminate + diphosphate</text>
        <dbReference type="Rhea" id="RHEA:11344"/>
        <dbReference type="ChEBI" id="CHEBI:33019"/>
        <dbReference type="ChEBI" id="CHEBI:37563"/>
        <dbReference type="ChEBI" id="CHEBI:60073"/>
        <dbReference type="ChEBI" id="CHEBI:68671"/>
        <dbReference type="EC" id="2.7.7.43"/>
    </reaction>
</comment>
<comment type="cofactor">
    <cofactor evidence="1">
        <name>Mg(2+)</name>
        <dbReference type="ChEBI" id="CHEBI:18420"/>
    </cofactor>
    <cofactor evidence="1">
        <name>Mn(2+)</name>
        <dbReference type="ChEBI" id="CHEBI:29035"/>
    </cofactor>
</comment>
<comment type="subcellular location">
    <subcellularLocation>
        <location evidence="1">Cytoplasm</location>
    </subcellularLocation>
</comment>
<comment type="similarity">
    <text evidence="2">Belongs to the CMP-NeuNAc synthase family.</text>
</comment>
<gene>
    <name type="primary">neuA</name>
    <name type="ordered locus">SAG1158</name>
</gene>
<keyword id="KW-0972">Capsule biogenesis/degradation</keyword>
<keyword id="KW-0963">Cytoplasm</keyword>
<keyword id="KW-0270">Exopolysaccharide synthesis</keyword>
<keyword id="KW-0460">Magnesium</keyword>
<keyword id="KW-0464">Manganese</keyword>
<keyword id="KW-0548">Nucleotidyltransferase</keyword>
<keyword id="KW-1185">Reference proteome</keyword>
<keyword id="KW-0808">Transferase</keyword>